<accession>B1JU49</accession>
<feature type="chain" id="PRO_1000144388" description="Large ribosomal subunit protein bL17">
    <location>
        <begin position="1"/>
        <end position="131"/>
    </location>
</feature>
<comment type="subunit">
    <text evidence="1">Part of the 50S ribosomal subunit. Contacts protein L32.</text>
</comment>
<comment type="similarity">
    <text evidence="1">Belongs to the bacterial ribosomal protein bL17 family.</text>
</comment>
<proteinExistence type="inferred from homology"/>
<name>RL17_BURO0</name>
<organism>
    <name type="scientific">Burkholderia orbicola (strain MC0-3)</name>
    <dbReference type="NCBI Taxonomy" id="406425"/>
    <lineage>
        <taxon>Bacteria</taxon>
        <taxon>Pseudomonadati</taxon>
        <taxon>Pseudomonadota</taxon>
        <taxon>Betaproteobacteria</taxon>
        <taxon>Burkholderiales</taxon>
        <taxon>Burkholderiaceae</taxon>
        <taxon>Burkholderia</taxon>
        <taxon>Burkholderia cepacia complex</taxon>
        <taxon>Burkholderia orbicola</taxon>
    </lineage>
</organism>
<keyword id="KW-0687">Ribonucleoprotein</keyword>
<keyword id="KW-0689">Ribosomal protein</keyword>
<reference key="1">
    <citation type="submission" date="2008-02" db="EMBL/GenBank/DDBJ databases">
        <title>Complete sequence of chromosome 1 of Burkholderia cenocepacia MC0-3.</title>
        <authorList>
            <person name="Copeland A."/>
            <person name="Lucas S."/>
            <person name="Lapidus A."/>
            <person name="Barry K."/>
            <person name="Bruce D."/>
            <person name="Goodwin L."/>
            <person name="Glavina del Rio T."/>
            <person name="Dalin E."/>
            <person name="Tice H."/>
            <person name="Pitluck S."/>
            <person name="Chain P."/>
            <person name="Malfatti S."/>
            <person name="Shin M."/>
            <person name="Vergez L."/>
            <person name="Schmutz J."/>
            <person name="Larimer F."/>
            <person name="Land M."/>
            <person name="Hauser L."/>
            <person name="Kyrpides N."/>
            <person name="Mikhailova N."/>
            <person name="Tiedje J."/>
            <person name="Richardson P."/>
        </authorList>
    </citation>
    <scope>NUCLEOTIDE SEQUENCE [LARGE SCALE GENOMIC DNA]</scope>
    <source>
        <strain>MC0-3</strain>
    </source>
</reference>
<protein>
    <recommendedName>
        <fullName evidence="1">Large ribosomal subunit protein bL17</fullName>
    </recommendedName>
    <alternativeName>
        <fullName evidence="2">50S ribosomal protein L17</fullName>
    </alternativeName>
</protein>
<gene>
    <name evidence="1" type="primary">rplQ</name>
    <name type="ordered locus">Bcenmc03_0354</name>
</gene>
<dbReference type="EMBL" id="CP000958">
    <property type="protein sequence ID" value="ACA89534.1"/>
    <property type="molecule type" value="Genomic_DNA"/>
</dbReference>
<dbReference type="RefSeq" id="WP_006477175.1">
    <property type="nucleotide sequence ID" value="NC_010508.1"/>
</dbReference>
<dbReference type="SMR" id="B1JU49"/>
<dbReference type="GeneID" id="98107133"/>
<dbReference type="KEGG" id="bcm:Bcenmc03_0354"/>
<dbReference type="HOGENOM" id="CLU_074407_2_0_4"/>
<dbReference type="Proteomes" id="UP000002169">
    <property type="component" value="Chromosome 1"/>
</dbReference>
<dbReference type="GO" id="GO:0022625">
    <property type="term" value="C:cytosolic large ribosomal subunit"/>
    <property type="evidence" value="ECO:0007669"/>
    <property type="project" value="TreeGrafter"/>
</dbReference>
<dbReference type="GO" id="GO:0003735">
    <property type="term" value="F:structural constituent of ribosome"/>
    <property type="evidence" value="ECO:0007669"/>
    <property type="project" value="InterPro"/>
</dbReference>
<dbReference type="GO" id="GO:0006412">
    <property type="term" value="P:translation"/>
    <property type="evidence" value="ECO:0007669"/>
    <property type="project" value="UniProtKB-UniRule"/>
</dbReference>
<dbReference type="FunFam" id="3.90.1030.10:FF:000001">
    <property type="entry name" value="50S ribosomal protein L17"/>
    <property type="match status" value="1"/>
</dbReference>
<dbReference type="Gene3D" id="3.90.1030.10">
    <property type="entry name" value="Ribosomal protein L17"/>
    <property type="match status" value="1"/>
</dbReference>
<dbReference type="HAMAP" id="MF_01368">
    <property type="entry name" value="Ribosomal_bL17"/>
    <property type="match status" value="1"/>
</dbReference>
<dbReference type="InterPro" id="IPR000456">
    <property type="entry name" value="Ribosomal_bL17"/>
</dbReference>
<dbReference type="InterPro" id="IPR047859">
    <property type="entry name" value="Ribosomal_bL17_CS"/>
</dbReference>
<dbReference type="InterPro" id="IPR036373">
    <property type="entry name" value="Ribosomal_bL17_sf"/>
</dbReference>
<dbReference type="NCBIfam" id="TIGR00059">
    <property type="entry name" value="L17"/>
    <property type="match status" value="1"/>
</dbReference>
<dbReference type="PANTHER" id="PTHR14413:SF16">
    <property type="entry name" value="LARGE RIBOSOMAL SUBUNIT PROTEIN BL17M"/>
    <property type="match status" value="1"/>
</dbReference>
<dbReference type="PANTHER" id="PTHR14413">
    <property type="entry name" value="RIBOSOMAL PROTEIN L17"/>
    <property type="match status" value="1"/>
</dbReference>
<dbReference type="Pfam" id="PF01196">
    <property type="entry name" value="Ribosomal_L17"/>
    <property type="match status" value="1"/>
</dbReference>
<dbReference type="SUPFAM" id="SSF64263">
    <property type="entry name" value="Prokaryotic ribosomal protein L17"/>
    <property type="match status" value="1"/>
</dbReference>
<dbReference type="PROSITE" id="PS01167">
    <property type="entry name" value="RIBOSOMAL_L17"/>
    <property type="match status" value="1"/>
</dbReference>
<sequence length="131" mass="15050">MRHRHGLRKLNRTSSHRLAMLRNMSNSLIEHEVIKTTLPKAKELRKVVEPLITLGKKPSLANRRLAFNRLRDRDSVAKLFDVLGPRFANRPGGYLRVLKFGFRVGDNAPMALVELLDRPEVDETENVQEAE</sequence>
<evidence type="ECO:0000255" key="1">
    <source>
        <dbReference type="HAMAP-Rule" id="MF_01368"/>
    </source>
</evidence>
<evidence type="ECO:0000305" key="2"/>